<feature type="chain" id="PRO_0000066058" description="Uncharacterized protein PP_0002">
    <location>
        <begin position="1"/>
        <end position="263"/>
    </location>
</feature>
<evidence type="ECO:0000305" key="1"/>
<sequence>MAKVFAIANQKGGVGKTTTCINLAASLAATKRRVLLIDLDPQGNATMGSGVDKHELEHSVYDLLIGECDLAQAMHYSEHGGFQLLPANRDLTAAEVVLLEMQVKESRLRNALAPIRDNYDYILIDCPPSLSMLTLNALVASDGVIIPMQCEYYALEGLSDLVDNIKRIAARLNPELKIEGLLRTMYDPRLSLNNDVSAQLKEHFGPQLYDTVIPRNIRLAEAPSFGMPALAYDKQSRGALAYLALAGELVRRQRRPSRTAQTT</sequence>
<keyword id="KW-1185">Reference proteome</keyword>
<accession>P0A149</accession>
<accession>P31856</accession>
<name>Y002_PSEPK</name>
<reference key="1">
    <citation type="journal article" date="2002" name="Environ. Microbiol.">
        <title>Complete genome sequence and comparative analysis of the metabolically versatile Pseudomonas putida KT2440.</title>
        <authorList>
            <person name="Nelson K.E."/>
            <person name="Weinel C."/>
            <person name="Paulsen I.T."/>
            <person name="Dodson R.J."/>
            <person name="Hilbert H."/>
            <person name="Martins dos Santos V.A.P."/>
            <person name="Fouts D.E."/>
            <person name="Gill S.R."/>
            <person name="Pop M."/>
            <person name="Holmes M."/>
            <person name="Brinkac L.M."/>
            <person name="Beanan M.J."/>
            <person name="DeBoy R.T."/>
            <person name="Daugherty S.C."/>
            <person name="Kolonay J.F."/>
            <person name="Madupu R."/>
            <person name="Nelson W.C."/>
            <person name="White O."/>
            <person name="Peterson J.D."/>
            <person name="Khouri H.M."/>
            <person name="Hance I."/>
            <person name="Chris Lee P."/>
            <person name="Holtzapple E.K."/>
            <person name="Scanlan D."/>
            <person name="Tran K."/>
            <person name="Moazzez A."/>
            <person name="Utterback T.R."/>
            <person name="Rizzo M."/>
            <person name="Lee K."/>
            <person name="Kosack D."/>
            <person name="Moestl D."/>
            <person name="Wedler H."/>
            <person name="Lauber J."/>
            <person name="Stjepandic D."/>
            <person name="Hoheisel J."/>
            <person name="Straetz M."/>
            <person name="Heim S."/>
            <person name="Kiewitz C."/>
            <person name="Eisen J.A."/>
            <person name="Timmis K.N."/>
            <person name="Duesterhoeft A."/>
            <person name="Tuemmler B."/>
            <person name="Fraser C.M."/>
        </authorList>
    </citation>
    <scope>NUCLEOTIDE SEQUENCE [LARGE SCALE GENOMIC DNA]</scope>
    <source>
        <strain>ATCC 47054 / DSM 6125 / CFBP 8728 / NCIMB 11950 / KT2440</strain>
    </source>
</reference>
<dbReference type="EMBL" id="AE015451">
    <property type="protein sequence ID" value="AAN65636.1"/>
    <property type="molecule type" value="Genomic_DNA"/>
</dbReference>
<dbReference type="RefSeq" id="NP_742172.1">
    <property type="nucleotide sequence ID" value="NC_002947.4"/>
</dbReference>
<dbReference type="RefSeq" id="WP_003253182.1">
    <property type="nucleotide sequence ID" value="NZ_CP169744.1"/>
</dbReference>
<dbReference type="SMR" id="P0A149"/>
<dbReference type="STRING" id="160488.PP_0002"/>
<dbReference type="PaxDb" id="160488-PP_0002"/>
<dbReference type="KEGG" id="ppu:PP_0002"/>
<dbReference type="PATRIC" id="fig|160488.4.peg.2"/>
<dbReference type="eggNOG" id="COG1192">
    <property type="taxonomic scope" value="Bacteria"/>
</dbReference>
<dbReference type="HOGENOM" id="CLU_037612_1_3_6"/>
<dbReference type="OrthoDB" id="9815116at2"/>
<dbReference type="PhylomeDB" id="P0A149"/>
<dbReference type="BioCyc" id="PPUT160488:G1G01-2-MONOMER"/>
<dbReference type="Proteomes" id="UP000000556">
    <property type="component" value="Chromosome"/>
</dbReference>
<dbReference type="CDD" id="cd02042">
    <property type="entry name" value="ParAB_family"/>
    <property type="match status" value="1"/>
</dbReference>
<dbReference type="FunFam" id="3.40.50.300:FF:000285">
    <property type="entry name" value="Sporulation initiation inhibitor Soj"/>
    <property type="match status" value="1"/>
</dbReference>
<dbReference type="Gene3D" id="3.40.50.300">
    <property type="entry name" value="P-loop containing nucleotide triphosphate hydrolases"/>
    <property type="match status" value="1"/>
</dbReference>
<dbReference type="InterPro" id="IPR025669">
    <property type="entry name" value="AAA_dom"/>
</dbReference>
<dbReference type="InterPro" id="IPR050678">
    <property type="entry name" value="DNA_Partitioning_ATPase"/>
</dbReference>
<dbReference type="InterPro" id="IPR027417">
    <property type="entry name" value="P-loop_NTPase"/>
</dbReference>
<dbReference type="PANTHER" id="PTHR13696">
    <property type="entry name" value="P-LOOP CONTAINING NUCLEOSIDE TRIPHOSPHATE HYDROLASE"/>
    <property type="match status" value="1"/>
</dbReference>
<dbReference type="PANTHER" id="PTHR13696:SF52">
    <property type="entry name" value="PARA FAMILY PROTEIN CT_582"/>
    <property type="match status" value="1"/>
</dbReference>
<dbReference type="Pfam" id="PF13614">
    <property type="entry name" value="AAA_31"/>
    <property type="match status" value="1"/>
</dbReference>
<dbReference type="SUPFAM" id="SSF52540">
    <property type="entry name" value="P-loop containing nucleoside triphosphate hydrolases"/>
    <property type="match status" value="1"/>
</dbReference>
<comment type="similarity">
    <text evidence="1">To B.subtilis soj.</text>
</comment>
<protein>
    <recommendedName>
        <fullName>Uncharacterized protein PP_0002</fullName>
    </recommendedName>
</protein>
<gene>
    <name type="ordered locus">PP_0002</name>
</gene>
<organism>
    <name type="scientific">Pseudomonas putida (strain ATCC 47054 / DSM 6125 / CFBP 8728 / NCIMB 11950 / KT2440)</name>
    <dbReference type="NCBI Taxonomy" id="160488"/>
    <lineage>
        <taxon>Bacteria</taxon>
        <taxon>Pseudomonadati</taxon>
        <taxon>Pseudomonadota</taxon>
        <taxon>Gammaproteobacteria</taxon>
        <taxon>Pseudomonadales</taxon>
        <taxon>Pseudomonadaceae</taxon>
        <taxon>Pseudomonas</taxon>
    </lineage>
</organism>
<proteinExistence type="predicted"/>